<evidence type="ECO:0000255" key="1">
    <source>
        <dbReference type="HAMAP-Rule" id="MF_00744"/>
    </source>
</evidence>
<protein>
    <recommendedName>
        <fullName evidence="1">Met repressor</fullName>
    </recommendedName>
    <alternativeName>
        <fullName evidence="1">Met regulon regulatory protein MetJ</fullName>
    </alternativeName>
</protein>
<comment type="function">
    <text evidence="1">This regulatory protein, when combined with SAM (S-adenosylmethionine) represses the expression of the methionine regulon and of enzymes involved in SAM synthesis.</text>
</comment>
<comment type="subunit">
    <text evidence="1">Homodimer.</text>
</comment>
<comment type="subcellular location">
    <subcellularLocation>
        <location evidence="1">Cytoplasm</location>
    </subcellularLocation>
</comment>
<comment type="domain">
    <text>Does not bind DNA by a helix-turn-helix motif.</text>
</comment>
<comment type="similarity">
    <text evidence="1">Belongs to the MetJ family.</text>
</comment>
<feature type="chain" id="PRO_1000046505" description="Met repressor">
    <location>
        <begin position="1"/>
        <end position="105"/>
    </location>
</feature>
<reference key="1">
    <citation type="journal article" date="2004" name="Proc. Natl. Acad. Sci. U.S.A.">
        <title>Insights into the evolution of Yersinia pestis through whole-genome comparison with Yersinia pseudotuberculosis.</title>
        <authorList>
            <person name="Chain P.S.G."/>
            <person name="Carniel E."/>
            <person name="Larimer F.W."/>
            <person name="Lamerdin J."/>
            <person name="Stoutland P.O."/>
            <person name="Regala W.M."/>
            <person name="Georgescu A.M."/>
            <person name="Vergez L.M."/>
            <person name="Land M.L."/>
            <person name="Motin V.L."/>
            <person name="Brubaker R.R."/>
            <person name="Fowler J."/>
            <person name="Hinnebusch J."/>
            <person name="Marceau M."/>
            <person name="Medigue C."/>
            <person name="Simonet M."/>
            <person name="Chenal-Francisque V."/>
            <person name="Souza B."/>
            <person name="Dacheux D."/>
            <person name="Elliott J.M."/>
            <person name="Derbise A."/>
            <person name="Hauser L.J."/>
            <person name="Garcia E."/>
        </authorList>
    </citation>
    <scope>NUCLEOTIDE SEQUENCE [LARGE SCALE GENOMIC DNA]</scope>
    <source>
        <strain>IP32953</strain>
    </source>
</reference>
<gene>
    <name evidence="1" type="primary">metJ</name>
    <name type="ordered locus">YPTB0104</name>
</gene>
<proteinExistence type="inferred from homology"/>
<sequence length="105" mass="12150">MAEWNGEYVSPYAEHGKKSEQVKKITVSIPLKVLKILTDERTRRQVNNLRHATNSELLCEAFLHAFTGQPLPNDEDLRKERSDEIPEAAKILMRELGVDPDTWEY</sequence>
<name>METJ_YERPS</name>
<accession>Q66G78</accession>
<dbReference type="EMBL" id="BX936398">
    <property type="protein sequence ID" value="CAH19344.1"/>
    <property type="molecule type" value="Genomic_DNA"/>
</dbReference>
<dbReference type="RefSeq" id="WP_004392248.1">
    <property type="nucleotide sequence ID" value="NZ_CP009712.1"/>
</dbReference>
<dbReference type="SMR" id="Q66G78"/>
<dbReference type="GeneID" id="97458248"/>
<dbReference type="KEGG" id="ypo:BZ17_2492"/>
<dbReference type="KEGG" id="yps:YPTB0104"/>
<dbReference type="PATRIC" id="fig|273123.14.peg.2612"/>
<dbReference type="Proteomes" id="UP000001011">
    <property type="component" value="Chromosome"/>
</dbReference>
<dbReference type="GO" id="GO:0005737">
    <property type="term" value="C:cytoplasm"/>
    <property type="evidence" value="ECO:0007669"/>
    <property type="project" value="UniProtKB-SubCell"/>
</dbReference>
<dbReference type="GO" id="GO:0003677">
    <property type="term" value="F:DNA binding"/>
    <property type="evidence" value="ECO:0007669"/>
    <property type="project" value="UniProtKB-KW"/>
</dbReference>
<dbReference type="GO" id="GO:0003700">
    <property type="term" value="F:DNA-binding transcription factor activity"/>
    <property type="evidence" value="ECO:0007669"/>
    <property type="project" value="InterPro"/>
</dbReference>
<dbReference type="GO" id="GO:0009086">
    <property type="term" value="P:methionine biosynthetic process"/>
    <property type="evidence" value="ECO:0007669"/>
    <property type="project" value="UniProtKB-UniRule"/>
</dbReference>
<dbReference type="GO" id="GO:0045892">
    <property type="term" value="P:negative regulation of DNA-templated transcription"/>
    <property type="evidence" value="ECO:0007669"/>
    <property type="project" value="UniProtKB-UniRule"/>
</dbReference>
<dbReference type="CDD" id="cd00490">
    <property type="entry name" value="Met_repressor_MetJ"/>
    <property type="match status" value="1"/>
</dbReference>
<dbReference type="FunFam" id="1.10.140.10:FF:000001">
    <property type="entry name" value="Met repressor"/>
    <property type="match status" value="1"/>
</dbReference>
<dbReference type="Gene3D" id="1.10.140.10">
    <property type="entry name" value="MET Apo-Repressor, subunit A"/>
    <property type="match status" value="1"/>
</dbReference>
<dbReference type="HAMAP" id="MF_00744">
    <property type="entry name" value="MetJ"/>
    <property type="match status" value="1"/>
</dbReference>
<dbReference type="InterPro" id="IPR002084">
    <property type="entry name" value="Met_repressor_MetJ"/>
</dbReference>
<dbReference type="InterPro" id="IPR023453">
    <property type="entry name" value="Met_repressor_MetJ_dom_sf"/>
</dbReference>
<dbReference type="InterPro" id="IPR010985">
    <property type="entry name" value="Ribbon_hlx_hlx"/>
</dbReference>
<dbReference type="NCBIfam" id="NF003622">
    <property type="entry name" value="PRK05264.1"/>
    <property type="match status" value="1"/>
</dbReference>
<dbReference type="Pfam" id="PF01340">
    <property type="entry name" value="MetJ"/>
    <property type="match status" value="1"/>
</dbReference>
<dbReference type="SUPFAM" id="SSF47598">
    <property type="entry name" value="Ribbon-helix-helix"/>
    <property type="match status" value="1"/>
</dbReference>
<organism>
    <name type="scientific">Yersinia pseudotuberculosis serotype I (strain IP32953)</name>
    <dbReference type="NCBI Taxonomy" id="273123"/>
    <lineage>
        <taxon>Bacteria</taxon>
        <taxon>Pseudomonadati</taxon>
        <taxon>Pseudomonadota</taxon>
        <taxon>Gammaproteobacteria</taxon>
        <taxon>Enterobacterales</taxon>
        <taxon>Yersiniaceae</taxon>
        <taxon>Yersinia</taxon>
    </lineage>
</organism>
<keyword id="KW-0028">Amino-acid biosynthesis</keyword>
<keyword id="KW-0963">Cytoplasm</keyword>
<keyword id="KW-0238">DNA-binding</keyword>
<keyword id="KW-0486">Methionine biosynthesis</keyword>
<keyword id="KW-0678">Repressor</keyword>
<keyword id="KW-0804">Transcription</keyword>
<keyword id="KW-0805">Transcription regulation</keyword>